<sequence length="226" mass="25550">MNPIVINRLQRKLGYTFNHQELLQQALTHRSASSKHNERLEFLGDSILSYVIANALYHRFPRVDEGDMSRMRATLVRGNTLAELAREFELGECLRLGPGELKSGGFRRESILADTVEALIGGVFLDSDIQTVEKLILNWYQTRLDEISPGDKQKDPKTRLQEYLQGRHLPLPTYLVVQVRGEAHDQEFTIHCQVSGLSEPVVGTGSSRRKAEQAAAEQALKKLELE</sequence>
<feature type="chain" id="PRO_0000228581" description="Ribonuclease 3">
    <location>
        <begin position="1"/>
        <end position="226"/>
    </location>
</feature>
<feature type="domain" description="RNase III" evidence="1">
    <location>
        <begin position="6"/>
        <end position="128"/>
    </location>
</feature>
<feature type="domain" description="DRBM" evidence="1">
    <location>
        <begin position="155"/>
        <end position="225"/>
    </location>
</feature>
<feature type="active site" evidence="1">
    <location>
        <position position="45"/>
    </location>
</feature>
<feature type="active site" evidence="1">
    <location>
        <position position="117"/>
    </location>
</feature>
<feature type="binding site" evidence="1">
    <location>
        <position position="41"/>
    </location>
    <ligand>
        <name>Mg(2+)</name>
        <dbReference type="ChEBI" id="CHEBI:18420"/>
    </ligand>
</feature>
<feature type="binding site" evidence="1">
    <location>
        <position position="114"/>
    </location>
    <ligand>
        <name>Mg(2+)</name>
        <dbReference type="ChEBI" id="CHEBI:18420"/>
    </ligand>
</feature>
<feature type="binding site" evidence="1">
    <location>
        <position position="117"/>
    </location>
    <ligand>
        <name>Mg(2+)</name>
        <dbReference type="ChEBI" id="CHEBI:18420"/>
    </ligand>
</feature>
<proteinExistence type="inferred from homology"/>
<name>RNC_SHIDS</name>
<keyword id="KW-0963">Cytoplasm</keyword>
<keyword id="KW-0255">Endonuclease</keyword>
<keyword id="KW-0378">Hydrolase</keyword>
<keyword id="KW-0460">Magnesium</keyword>
<keyword id="KW-0479">Metal-binding</keyword>
<keyword id="KW-0507">mRNA processing</keyword>
<keyword id="KW-0540">Nuclease</keyword>
<keyword id="KW-1185">Reference proteome</keyword>
<keyword id="KW-0694">RNA-binding</keyword>
<keyword id="KW-0698">rRNA processing</keyword>
<keyword id="KW-0699">rRNA-binding</keyword>
<keyword id="KW-0819">tRNA processing</keyword>
<dbReference type="EC" id="3.1.26.3" evidence="1"/>
<dbReference type="EMBL" id="CP000034">
    <property type="protein sequence ID" value="ABB62851.1"/>
    <property type="molecule type" value="Genomic_DNA"/>
</dbReference>
<dbReference type="RefSeq" id="WP_001068343.1">
    <property type="nucleotide sequence ID" value="NC_007606.1"/>
</dbReference>
<dbReference type="RefSeq" id="YP_404342.1">
    <property type="nucleotide sequence ID" value="NC_007606.1"/>
</dbReference>
<dbReference type="SMR" id="Q32CV4"/>
<dbReference type="STRING" id="300267.SDY_2808"/>
<dbReference type="EnsemblBacteria" id="ABB62851">
    <property type="protein sequence ID" value="ABB62851"/>
    <property type="gene ID" value="SDY_2808"/>
</dbReference>
<dbReference type="GeneID" id="93774524"/>
<dbReference type="KEGG" id="sdy:SDY_2808"/>
<dbReference type="PATRIC" id="fig|300267.13.peg.3383"/>
<dbReference type="HOGENOM" id="CLU_000907_1_1_6"/>
<dbReference type="Proteomes" id="UP000002716">
    <property type="component" value="Chromosome"/>
</dbReference>
<dbReference type="GO" id="GO:0005737">
    <property type="term" value="C:cytoplasm"/>
    <property type="evidence" value="ECO:0007669"/>
    <property type="project" value="UniProtKB-SubCell"/>
</dbReference>
<dbReference type="GO" id="GO:0003725">
    <property type="term" value="F:double-stranded RNA binding"/>
    <property type="evidence" value="ECO:0007669"/>
    <property type="project" value="TreeGrafter"/>
</dbReference>
<dbReference type="GO" id="GO:0046872">
    <property type="term" value="F:metal ion binding"/>
    <property type="evidence" value="ECO:0007669"/>
    <property type="project" value="UniProtKB-KW"/>
</dbReference>
<dbReference type="GO" id="GO:0004525">
    <property type="term" value="F:ribonuclease III activity"/>
    <property type="evidence" value="ECO:0007669"/>
    <property type="project" value="UniProtKB-UniRule"/>
</dbReference>
<dbReference type="GO" id="GO:0019843">
    <property type="term" value="F:rRNA binding"/>
    <property type="evidence" value="ECO:0007669"/>
    <property type="project" value="UniProtKB-KW"/>
</dbReference>
<dbReference type="GO" id="GO:0006397">
    <property type="term" value="P:mRNA processing"/>
    <property type="evidence" value="ECO:0007669"/>
    <property type="project" value="UniProtKB-UniRule"/>
</dbReference>
<dbReference type="GO" id="GO:0010468">
    <property type="term" value="P:regulation of gene expression"/>
    <property type="evidence" value="ECO:0007669"/>
    <property type="project" value="TreeGrafter"/>
</dbReference>
<dbReference type="GO" id="GO:0006364">
    <property type="term" value="P:rRNA processing"/>
    <property type="evidence" value="ECO:0007669"/>
    <property type="project" value="UniProtKB-UniRule"/>
</dbReference>
<dbReference type="GO" id="GO:0008033">
    <property type="term" value="P:tRNA processing"/>
    <property type="evidence" value="ECO:0007669"/>
    <property type="project" value="UniProtKB-KW"/>
</dbReference>
<dbReference type="CDD" id="cd10845">
    <property type="entry name" value="DSRM_RNAse_III_family"/>
    <property type="match status" value="1"/>
</dbReference>
<dbReference type="CDD" id="cd00593">
    <property type="entry name" value="RIBOc"/>
    <property type="match status" value="1"/>
</dbReference>
<dbReference type="FunFam" id="1.10.1520.10:FF:000001">
    <property type="entry name" value="Ribonuclease 3"/>
    <property type="match status" value="1"/>
</dbReference>
<dbReference type="FunFam" id="3.30.160.20:FF:000003">
    <property type="entry name" value="Ribonuclease 3"/>
    <property type="match status" value="1"/>
</dbReference>
<dbReference type="Gene3D" id="3.30.160.20">
    <property type="match status" value="1"/>
</dbReference>
<dbReference type="Gene3D" id="1.10.1520.10">
    <property type="entry name" value="Ribonuclease III domain"/>
    <property type="match status" value="1"/>
</dbReference>
<dbReference type="HAMAP" id="MF_00104">
    <property type="entry name" value="RNase_III"/>
    <property type="match status" value="1"/>
</dbReference>
<dbReference type="InterPro" id="IPR014720">
    <property type="entry name" value="dsRBD_dom"/>
</dbReference>
<dbReference type="InterPro" id="IPR011907">
    <property type="entry name" value="RNase_III"/>
</dbReference>
<dbReference type="InterPro" id="IPR000999">
    <property type="entry name" value="RNase_III_dom"/>
</dbReference>
<dbReference type="InterPro" id="IPR036389">
    <property type="entry name" value="RNase_III_sf"/>
</dbReference>
<dbReference type="NCBIfam" id="TIGR02191">
    <property type="entry name" value="RNaseIII"/>
    <property type="match status" value="1"/>
</dbReference>
<dbReference type="PANTHER" id="PTHR11207:SF0">
    <property type="entry name" value="RIBONUCLEASE 3"/>
    <property type="match status" value="1"/>
</dbReference>
<dbReference type="PANTHER" id="PTHR11207">
    <property type="entry name" value="RIBONUCLEASE III"/>
    <property type="match status" value="1"/>
</dbReference>
<dbReference type="Pfam" id="PF00035">
    <property type="entry name" value="dsrm"/>
    <property type="match status" value="1"/>
</dbReference>
<dbReference type="Pfam" id="PF14622">
    <property type="entry name" value="Ribonucleas_3_3"/>
    <property type="match status" value="1"/>
</dbReference>
<dbReference type="SMART" id="SM00358">
    <property type="entry name" value="DSRM"/>
    <property type="match status" value="1"/>
</dbReference>
<dbReference type="SMART" id="SM00535">
    <property type="entry name" value="RIBOc"/>
    <property type="match status" value="1"/>
</dbReference>
<dbReference type="SUPFAM" id="SSF54768">
    <property type="entry name" value="dsRNA-binding domain-like"/>
    <property type="match status" value="1"/>
</dbReference>
<dbReference type="SUPFAM" id="SSF69065">
    <property type="entry name" value="RNase III domain-like"/>
    <property type="match status" value="1"/>
</dbReference>
<dbReference type="PROSITE" id="PS50137">
    <property type="entry name" value="DS_RBD"/>
    <property type="match status" value="1"/>
</dbReference>
<dbReference type="PROSITE" id="PS00517">
    <property type="entry name" value="RNASE_3_1"/>
    <property type="match status" value="1"/>
</dbReference>
<dbReference type="PROSITE" id="PS50142">
    <property type="entry name" value="RNASE_3_2"/>
    <property type="match status" value="1"/>
</dbReference>
<comment type="function">
    <text evidence="1">Digests double-stranded RNA. Involved in the processing of primary rRNA transcript to yield the immediate precursors to the large and small rRNAs (23S and 16S). Processes some mRNAs, and tRNAs when they are encoded in the rRNA operon. Processes pre-crRNA and tracrRNA of type II CRISPR loci if present in the organism.</text>
</comment>
<comment type="catalytic activity">
    <reaction evidence="1">
        <text>Endonucleolytic cleavage to 5'-phosphomonoester.</text>
        <dbReference type="EC" id="3.1.26.3"/>
    </reaction>
</comment>
<comment type="cofactor">
    <cofactor evidence="1">
        <name>Mg(2+)</name>
        <dbReference type="ChEBI" id="CHEBI:18420"/>
    </cofactor>
</comment>
<comment type="subunit">
    <text evidence="1">Homodimer.</text>
</comment>
<comment type="subcellular location">
    <subcellularLocation>
        <location evidence="1">Cytoplasm</location>
    </subcellularLocation>
</comment>
<comment type="similarity">
    <text evidence="1">Belongs to the ribonuclease III family.</text>
</comment>
<accession>Q32CV4</accession>
<protein>
    <recommendedName>
        <fullName evidence="1">Ribonuclease 3</fullName>
        <ecNumber evidence="1">3.1.26.3</ecNumber>
    </recommendedName>
    <alternativeName>
        <fullName evidence="1">Ribonuclease III</fullName>
        <shortName evidence="1">RNase III</shortName>
    </alternativeName>
</protein>
<organism>
    <name type="scientific">Shigella dysenteriae serotype 1 (strain Sd197)</name>
    <dbReference type="NCBI Taxonomy" id="300267"/>
    <lineage>
        <taxon>Bacteria</taxon>
        <taxon>Pseudomonadati</taxon>
        <taxon>Pseudomonadota</taxon>
        <taxon>Gammaproteobacteria</taxon>
        <taxon>Enterobacterales</taxon>
        <taxon>Enterobacteriaceae</taxon>
        <taxon>Shigella</taxon>
    </lineage>
</organism>
<reference key="1">
    <citation type="journal article" date="2005" name="Nucleic Acids Res.">
        <title>Genome dynamics and diversity of Shigella species, the etiologic agents of bacillary dysentery.</title>
        <authorList>
            <person name="Yang F."/>
            <person name="Yang J."/>
            <person name="Zhang X."/>
            <person name="Chen L."/>
            <person name="Jiang Y."/>
            <person name="Yan Y."/>
            <person name="Tang X."/>
            <person name="Wang J."/>
            <person name="Xiong Z."/>
            <person name="Dong J."/>
            <person name="Xue Y."/>
            <person name="Zhu Y."/>
            <person name="Xu X."/>
            <person name="Sun L."/>
            <person name="Chen S."/>
            <person name="Nie H."/>
            <person name="Peng J."/>
            <person name="Xu J."/>
            <person name="Wang Y."/>
            <person name="Yuan Z."/>
            <person name="Wen Y."/>
            <person name="Yao Z."/>
            <person name="Shen Y."/>
            <person name="Qiang B."/>
            <person name="Hou Y."/>
            <person name="Yu J."/>
            <person name="Jin Q."/>
        </authorList>
    </citation>
    <scope>NUCLEOTIDE SEQUENCE [LARGE SCALE GENOMIC DNA]</scope>
    <source>
        <strain>Sd197</strain>
    </source>
</reference>
<evidence type="ECO:0000255" key="1">
    <source>
        <dbReference type="HAMAP-Rule" id="MF_00104"/>
    </source>
</evidence>
<gene>
    <name evidence="1" type="primary">rnc</name>
    <name type="ordered locus">SDY_2808</name>
</gene>